<keyword id="KW-0963">Cytoplasm</keyword>
<keyword id="KW-0489">Methyltransferase</keyword>
<keyword id="KW-0949">S-adenosyl-L-methionine</keyword>
<keyword id="KW-0808">Transferase</keyword>
<accession>Q7WM36</accession>
<name>TPMT_BORBR</name>
<proteinExistence type="inferred from homology"/>
<comment type="catalytic activity">
    <reaction evidence="1">
        <text>S-adenosyl-L-methionine + a thiopurine = S-adenosyl-L-homocysteine + a thiopurine S-methylether.</text>
        <dbReference type="EC" id="2.1.1.67"/>
    </reaction>
</comment>
<comment type="subcellular location">
    <subcellularLocation>
        <location evidence="1">Cytoplasm</location>
    </subcellularLocation>
</comment>
<comment type="similarity">
    <text evidence="1">Belongs to the class I-like SAM-binding methyltransferase superfamily. TPMT family.</text>
</comment>
<feature type="chain" id="PRO_0000220116" description="Thiopurine S-methyltransferase">
    <location>
        <begin position="1"/>
        <end position="219"/>
    </location>
</feature>
<feature type="binding site" evidence="1">
    <location>
        <position position="10"/>
    </location>
    <ligand>
        <name>S-adenosyl-L-methionine</name>
        <dbReference type="ChEBI" id="CHEBI:59789"/>
    </ligand>
</feature>
<feature type="binding site" evidence="1">
    <location>
        <position position="45"/>
    </location>
    <ligand>
        <name>S-adenosyl-L-methionine</name>
        <dbReference type="ChEBI" id="CHEBI:59789"/>
    </ligand>
</feature>
<feature type="binding site" evidence="1">
    <location>
        <position position="66"/>
    </location>
    <ligand>
        <name>S-adenosyl-L-methionine</name>
        <dbReference type="ChEBI" id="CHEBI:59789"/>
    </ligand>
</feature>
<feature type="binding site" evidence="1">
    <location>
        <position position="123"/>
    </location>
    <ligand>
        <name>S-adenosyl-L-methionine</name>
        <dbReference type="ChEBI" id="CHEBI:59789"/>
    </ligand>
</feature>
<sequence>MDADFWLDRWREGRTHFHQTRVTPLLQKYWPALDVPAGGQVLVPLAGKSLDMVWLAGQGLRVLGVELSQLAVEQFFDENGLRPEIHQSAQGRHYVAGNLELICGDVFALEDATLAACAGVYDRAALVALPEPMRKRYAREVYGRLGRGCRGILITLDYPQDQMEGPPFSVDDAEVQALYAGHTEARLIDRRDILDKEPKFNQRGVARLDTLVYRLERLG</sequence>
<gene>
    <name evidence="1" type="primary">tpm</name>
    <name type="ordered locus">BB1557</name>
</gene>
<reference key="1">
    <citation type="journal article" date="2003" name="Nat. Genet.">
        <title>Comparative analysis of the genome sequences of Bordetella pertussis, Bordetella parapertussis and Bordetella bronchiseptica.</title>
        <authorList>
            <person name="Parkhill J."/>
            <person name="Sebaihia M."/>
            <person name="Preston A."/>
            <person name="Murphy L.D."/>
            <person name="Thomson N.R."/>
            <person name="Harris D.E."/>
            <person name="Holden M.T.G."/>
            <person name="Churcher C.M."/>
            <person name="Bentley S.D."/>
            <person name="Mungall K.L."/>
            <person name="Cerdeno-Tarraga A.-M."/>
            <person name="Temple L."/>
            <person name="James K.D."/>
            <person name="Harris B."/>
            <person name="Quail M.A."/>
            <person name="Achtman M."/>
            <person name="Atkin R."/>
            <person name="Baker S."/>
            <person name="Basham D."/>
            <person name="Bason N."/>
            <person name="Cherevach I."/>
            <person name="Chillingworth T."/>
            <person name="Collins M."/>
            <person name="Cronin A."/>
            <person name="Davis P."/>
            <person name="Doggett J."/>
            <person name="Feltwell T."/>
            <person name="Goble A."/>
            <person name="Hamlin N."/>
            <person name="Hauser H."/>
            <person name="Holroyd S."/>
            <person name="Jagels K."/>
            <person name="Leather S."/>
            <person name="Moule S."/>
            <person name="Norberczak H."/>
            <person name="O'Neil S."/>
            <person name="Ormond D."/>
            <person name="Price C."/>
            <person name="Rabbinowitsch E."/>
            <person name="Rutter S."/>
            <person name="Sanders M."/>
            <person name="Saunders D."/>
            <person name="Seeger K."/>
            <person name="Sharp S."/>
            <person name="Simmonds M."/>
            <person name="Skelton J."/>
            <person name="Squares R."/>
            <person name="Squares S."/>
            <person name="Stevens K."/>
            <person name="Unwin L."/>
            <person name="Whitehead S."/>
            <person name="Barrell B.G."/>
            <person name="Maskell D.J."/>
        </authorList>
    </citation>
    <scope>NUCLEOTIDE SEQUENCE [LARGE SCALE GENOMIC DNA]</scope>
    <source>
        <strain>ATCC BAA-588 / NCTC 13252 / RB50</strain>
    </source>
</reference>
<dbReference type="EC" id="2.1.1.67" evidence="1"/>
<dbReference type="EMBL" id="BX640441">
    <property type="protein sequence ID" value="CAE32054.1"/>
    <property type="molecule type" value="Genomic_DNA"/>
</dbReference>
<dbReference type="RefSeq" id="WP_003809767.1">
    <property type="nucleotide sequence ID" value="NC_002927.3"/>
</dbReference>
<dbReference type="SMR" id="Q7WM36"/>
<dbReference type="KEGG" id="bbr:BB1557"/>
<dbReference type="eggNOG" id="COG0500">
    <property type="taxonomic scope" value="Bacteria"/>
</dbReference>
<dbReference type="HOGENOM" id="CLU_085515_1_0_4"/>
<dbReference type="Proteomes" id="UP000001027">
    <property type="component" value="Chromosome"/>
</dbReference>
<dbReference type="GO" id="GO:0005737">
    <property type="term" value="C:cytoplasm"/>
    <property type="evidence" value="ECO:0007669"/>
    <property type="project" value="UniProtKB-SubCell"/>
</dbReference>
<dbReference type="GO" id="GO:0008119">
    <property type="term" value="F:thiopurine S-methyltransferase activity"/>
    <property type="evidence" value="ECO:0007669"/>
    <property type="project" value="UniProtKB-UniRule"/>
</dbReference>
<dbReference type="GO" id="GO:0032259">
    <property type="term" value="P:methylation"/>
    <property type="evidence" value="ECO:0007669"/>
    <property type="project" value="UniProtKB-KW"/>
</dbReference>
<dbReference type="GO" id="GO:0010038">
    <property type="term" value="P:response to metal ion"/>
    <property type="evidence" value="ECO:0007669"/>
    <property type="project" value="InterPro"/>
</dbReference>
<dbReference type="FunFam" id="3.40.50.150:FF:000101">
    <property type="entry name" value="Thiopurine S-methyltransferase"/>
    <property type="match status" value="1"/>
</dbReference>
<dbReference type="Gene3D" id="3.40.50.150">
    <property type="entry name" value="Vaccinia Virus protein VP39"/>
    <property type="match status" value="1"/>
</dbReference>
<dbReference type="HAMAP" id="MF_00812">
    <property type="entry name" value="Thiopur_methtran"/>
    <property type="match status" value="1"/>
</dbReference>
<dbReference type="InterPro" id="IPR029063">
    <property type="entry name" value="SAM-dependent_MTases_sf"/>
</dbReference>
<dbReference type="InterPro" id="IPR022474">
    <property type="entry name" value="Thiopur_S-MeTfrase_Se/Te_detox"/>
</dbReference>
<dbReference type="InterPro" id="IPR025835">
    <property type="entry name" value="Thiopurine_S-MeTrfase"/>
</dbReference>
<dbReference type="InterPro" id="IPR008854">
    <property type="entry name" value="TPMT"/>
</dbReference>
<dbReference type="NCBIfam" id="NF009732">
    <property type="entry name" value="PRK13255.1"/>
    <property type="match status" value="1"/>
</dbReference>
<dbReference type="NCBIfam" id="TIGR03840">
    <property type="entry name" value="TMPT_Se_Te"/>
    <property type="match status" value="1"/>
</dbReference>
<dbReference type="PANTHER" id="PTHR10259">
    <property type="entry name" value="THIOPURINE S-METHYLTRANSFERASE"/>
    <property type="match status" value="1"/>
</dbReference>
<dbReference type="PANTHER" id="PTHR10259:SF11">
    <property type="entry name" value="THIOPURINE S-METHYLTRANSFERASE"/>
    <property type="match status" value="1"/>
</dbReference>
<dbReference type="Pfam" id="PF05724">
    <property type="entry name" value="TPMT"/>
    <property type="match status" value="1"/>
</dbReference>
<dbReference type="PIRSF" id="PIRSF023956">
    <property type="entry name" value="Thiopurine_S-methyltransferase"/>
    <property type="match status" value="1"/>
</dbReference>
<dbReference type="SUPFAM" id="SSF53335">
    <property type="entry name" value="S-adenosyl-L-methionine-dependent methyltransferases"/>
    <property type="match status" value="1"/>
</dbReference>
<dbReference type="PROSITE" id="PS51585">
    <property type="entry name" value="SAM_MT_TPMT"/>
    <property type="match status" value="1"/>
</dbReference>
<evidence type="ECO:0000255" key="1">
    <source>
        <dbReference type="HAMAP-Rule" id="MF_00812"/>
    </source>
</evidence>
<organism>
    <name type="scientific">Bordetella bronchiseptica (strain ATCC BAA-588 / NCTC 13252 / RB50)</name>
    <name type="common">Alcaligenes bronchisepticus</name>
    <dbReference type="NCBI Taxonomy" id="257310"/>
    <lineage>
        <taxon>Bacteria</taxon>
        <taxon>Pseudomonadati</taxon>
        <taxon>Pseudomonadota</taxon>
        <taxon>Betaproteobacteria</taxon>
        <taxon>Burkholderiales</taxon>
        <taxon>Alcaligenaceae</taxon>
        <taxon>Bordetella</taxon>
    </lineage>
</organism>
<protein>
    <recommendedName>
        <fullName evidence="1">Thiopurine S-methyltransferase</fullName>
        <ecNumber evidence="1">2.1.1.67</ecNumber>
    </recommendedName>
    <alternativeName>
        <fullName evidence="1">Thiopurine methyltransferase</fullName>
    </alternativeName>
</protein>